<comment type="function">
    <text evidence="1">Component of the CBC complex, which binds co-transcriptionally to the 5' cap of pre-mRNAs and is involved in maturation, export and degradation of nuclear mRNAs.</text>
</comment>
<comment type="subunit">
    <text evidence="1">Component of the nuclear cap-binding complex (CBC), a heterodimer composed of cbc1 and cbc2 that interacts with capped RNAs.</text>
</comment>
<comment type="subcellular location">
    <subcellularLocation>
        <location evidence="1">Cytoplasm</location>
        <location evidence="1">Perinuclear region</location>
    </subcellularLocation>
    <subcellularLocation>
        <location evidence="4">Nucleus</location>
    </subcellularLocation>
</comment>
<comment type="similarity">
    <text evidence="5">Belongs to the RRM NCBP2 family.</text>
</comment>
<evidence type="ECO:0000250" key="1"/>
<evidence type="ECO:0000255" key="2">
    <source>
        <dbReference type="PROSITE-ProRule" id="PRU00176"/>
    </source>
</evidence>
<evidence type="ECO:0000256" key="3">
    <source>
        <dbReference type="SAM" id="MobiDB-lite"/>
    </source>
</evidence>
<evidence type="ECO:0000269" key="4">
    <source>
    </source>
</evidence>
<evidence type="ECO:0000305" key="5"/>
<protein>
    <recommendedName>
        <fullName>Nuclear cap-binding protein subunit 2</fullName>
    </recommendedName>
    <alternativeName>
        <fullName>20 kDa nuclear cap-binding protein</fullName>
    </alternativeName>
    <alternativeName>
        <fullName>NCBP 20 kDa subunit</fullName>
        <shortName>CBP20</shortName>
    </alternativeName>
</protein>
<gene>
    <name type="primary">cbc2</name>
    <name type="ORF">SPBC13A2.01c</name>
</gene>
<dbReference type="EMBL" id="CU329671">
    <property type="protein sequence ID" value="CAB99394.1"/>
    <property type="molecule type" value="Genomic_DNA"/>
</dbReference>
<dbReference type="RefSeq" id="NP_596414.1">
    <property type="nucleotide sequence ID" value="NM_001022333.2"/>
</dbReference>
<dbReference type="SMR" id="Q9P383"/>
<dbReference type="BioGRID" id="276341">
    <property type="interactions" value="5"/>
</dbReference>
<dbReference type="FunCoup" id="Q9P383">
    <property type="interactions" value="502"/>
</dbReference>
<dbReference type="STRING" id="284812.Q9P383"/>
<dbReference type="PaxDb" id="4896-SPBC13A2.01c.1"/>
<dbReference type="EnsemblFungi" id="SPBC13A2.01c.1">
    <property type="protein sequence ID" value="SPBC13A2.01c.1:pep"/>
    <property type="gene ID" value="SPBC13A2.01c"/>
</dbReference>
<dbReference type="GeneID" id="2539791"/>
<dbReference type="KEGG" id="spo:2539791"/>
<dbReference type="PomBase" id="SPBC13A2.01c">
    <property type="gene designation" value="cbc2"/>
</dbReference>
<dbReference type="VEuPathDB" id="FungiDB:SPBC13A2.01c"/>
<dbReference type="eggNOG" id="KOG0121">
    <property type="taxonomic scope" value="Eukaryota"/>
</dbReference>
<dbReference type="HOGENOM" id="CLU_070952_1_1_1"/>
<dbReference type="InParanoid" id="Q9P383"/>
<dbReference type="OMA" id="DELRWDH"/>
<dbReference type="PhylomeDB" id="Q9P383"/>
<dbReference type="Reactome" id="R-SPO-113418">
    <property type="pathway name" value="Formation of the Early Elongation Complex"/>
</dbReference>
<dbReference type="Reactome" id="R-SPO-159227">
    <property type="pathway name" value="Transport of the SLBP independent Mature mRNA"/>
</dbReference>
<dbReference type="Reactome" id="R-SPO-159231">
    <property type="pathway name" value="Transport of Mature mRNA Derived from an Intronless Transcript"/>
</dbReference>
<dbReference type="Reactome" id="R-SPO-159236">
    <property type="pathway name" value="Transport of Mature mRNA derived from an Intron-Containing Transcript"/>
</dbReference>
<dbReference type="Reactome" id="R-SPO-674695">
    <property type="pathway name" value="RNA Polymerase II Pre-transcription Events"/>
</dbReference>
<dbReference type="Reactome" id="R-SPO-72086">
    <property type="pathway name" value="mRNA Capping"/>
</dbReference>
<dbReference type="Reactome" id="R-SPO-72163">
    <property type="pathway name" value="mRNA Splicing - Major Pathway"/>
</dbReference>
<dbReference type="Reactome" id="R-SPO-72203">
    <property type="pathway name" value="Processing of Capped Intron-Containing Pre-mRNA"/>
</dbReference>
<dbReference type="Reactome" id="R-SPO-77595">
    <property type="pathway name" value="Processing of Intronless Pre-mRNAs"/>
</dbReference>
<dbReference type="Reactome" id="R-SPO-975956">
    <property type="pathway name" value="Nonsense Mediated Decay (NMD) independent of the Exon Junction Complex (EJC)"/>
</dbReference>
<dbReference type="Reactome" id="R-SPO-975957">
    <property type="pathway name" value="Nonsense Mediated Decay (NMD) enhanced by the Exon Junction Complex (EJC)"/>
</dbReference>
<dbReference type="PRO" id="PR:Q9P383"/>
<dbReference type="Proteomes" id="UP000002485">
    <property type="component" value="Chromosome II"/>
</dbReference>
<dbReference type="GO" id="GO:0005829">
    <property type="term" value="C:cytosol"/>
    <property type="evidence" value="ECO:0007005"/>
    <property type="project" value="PomBase"/>
</dbReference>
<dbReference type="GO" id="GO:0005846">
    <property type="term" value="C:nuclear cap binding complex"/>
    <property type="evidence" value="ECO:0000318"/>
    <property type="project" value="GO_Central"/>
</dbReference>
<dbReference type="GO" id="GO:0005634">
    <property type="term" value="C:nucleus"/>
    <property type="evidence" value="ECO:0007005"/>
    <property type="project" value="PomBase"/>
</dbReference>
<dbReference type="GO" id="GO:0048471">
    <property type="term" value="C:perinuclear region of cytoplasm"/>
    <property type="evidence" value="ECO:0007669"/>
    <property type="project" value="UniProtKB-SubCell"/>
</dbReference>
<dbReference type="GO" id="GO:0000339">
    <property type="term" value="F:RNA cap binding"/>
    <property type="evidence" value="ECO:0000318"/>
    <property type="project" value="GO_Central"/>
</dbReference>
<dbReference type="GO" id="GO:0045292">
    <property type="term" value="P:mRNA cis splicing, via spliceosome"/>
    <property type="evidence" value="ECO:0007669"/>
    <property type="project" value="InterPro"/>
</dbReference>
<dbReference type="GO" id="GO:0000398">
    <property type="term" value="P:mRNA splicing, via spliceosome"/>
    <property type="evidence" value="ECO:0000318"/>
    <property type="project" value="GO_Central"/>
</dbReference>
<dbReference type="GO" id="GO:0051028">
    <property type="term" value="P:mRNA transport"/>
    <property type="evidence" value="ECO:0007669"/>
    <property type="project" value="UniProtKB-KW"/>
</dbReference>
<dbReference type="GO" id="GO:0071039">
    <property type="term" value="P:nuclear polyadenylation-dependent CUT catabolic process"/>
    <property type="evidence" value="ECO:0000305"/>
    <property type="project" value="PomBase"/>
</dbReference>
<dbReference type="CDD" id="cd12240">
    <property type="entry name" value="RRM_NCBP2"/>
    <property type="match status" value="1"/>
</dbReference>
<dbReference type="FunFam" id="3.30.70.330:FF:000538">
    <property type="entry name" value="Nuclear cap-binding protein subunit 2"/>
    <property type="match status" value="1"/>
</dbReference>
<dbReference type="Gene3D" id="3.30.70.330">
    <property type="match status" value="1"/>
</dbReference>
<dbReference type="InterPro" id="IPR027157">
    <property type="entry name" value="NCBP2"/>
</dbReference>
<dbReference type="InterPro" id="IPR034148">
    <property type="entry name" value="NCBP2_RRM"/>
</dbReference>
<dbReference type="InterPro" id="IPR012677">
    <property type="entry name" value="Nucleotide-bd_a/b_plait_sf"/>
</dbReference>
<dbReference type="InterPro" id="IPR035979">
    <property type="entry name" value="RBD_domain_sf"/>
</dbReference>
<dbReference type="InterPro" id="IPR000504">
    <property type="entry name" value="RRM_dom"/>
</dbReference>
<dbReference type="PANTHER" id="PTHR18847">
    <property type="entry name" value="20 KD NUCLEAR CAP BINDING PROTEIN"/>
    <property type="match status" value="1"/>
</dbReference>
<dbReference type="PANTHER" id="PTHR18847:SF0">
    <property type="entry name" value="NUCLEAR CAP-BINDING PROTEIN SUBUNIT 2"/>
    <property type="match status" value="1"/>
</dbReference>
<dbReference type="Pfam" id="PF00076">
    <property type="entry name" value="RRM_1"/>
    <property type="match status" value="1"/>
</dbReference>
<dbReference type="SMART" id="SM00360">
    <property type="entry name" value="RRM"/>
    <property type="match status" value="1"/>
</dbReference>
<dbReference type="SUPFAM" id="SSF54928">
    <property type="entry name" value="RNA-binding domain, RBD"/>
    <property type="match status" value="1"/>
</dbReference>
<dbReference type="PROSITE" id="PS50102">
    <property type="entry name" value="RRM"/>
    <property type="match status" value="1"/>
</dbReference>
<name>NCBP2_SCHPO</name>
<feature type="chain" id="PRO_0000310818" description="Nuclear cap-binding protein subunit 2">
    <location>
        <begin position="1"/>
        <end position="182"/>
    </location>
</feature>
<feature type="domain" description="RRM" evidence="2">
    <location>
        <begin position="32"/>
        <end position="110"/>
    </location>
</feature>
<feature type="region of interest" description="Disordered" evidence="3">
    <location>
        <begin position="114"/>
        <end position="182"/>
    </location>
</feature>
<feature type="compositionally biased region" description="Basic and acidic residues" evidence="3">
    <location>
        <begin position="126"/>
        <end position="136"/>
    </location>
</feature>
<feature type="compositionally biased region" description="Polar residues" evidence="3">
    <location>
        <begin position="145"/>
        <end position="175"/>
    </location>
</feature>
<feature type="binding site" evidence="1">
    <location>
        <position position="13"/>
    </location>
    <ligand>
        <name>mRNA</name>
        <dbReference type="ChEBI" id="CHEBI:33699"/>
    </ligand>
    <ligandPart>
        <name>mRNA cap</name>
    </ligandPart>
</feature>
<feature type="binding site" evidence="1">
    <location>
        <position position="35"/>
    </location>
    <ligand>
        <name>mRNA</name>
        <dbReference type="ChEBI" id="CHEBI:33699"/>
    </ligand>
    <ligandPart>
        <name>mRNA cap</name>
    </ligandPart>
</feature>
<feature type="binding site" evidence="1">
    <location>
        <begin position="104"/>
        <end position="108"/>
    </location>
    <ligand>
        <name>mRNA</name>
        <dbReference type="ChEBI" id="CHEBI:33699"/>
    </ligand>
    <ligandPart>
        <name>mRNA cap</name>
    </ligandPart>
</feature>
<feature type="binding site" evidence="1">
    <location>
        <begin position="115"/>
        <end position="119"/>
    </location>
    <ligand>
        <name>mRNA</name>
        <dbReference type="ChEBI" id="CHEBI:33699"/>
    </ligand>
    <ligandPart>
        <name>mRNA cap</name>
    </ligandPart>
</feature>
<feature type="binding site" evidence="1">
    <location>
        <begin position="125"/>
        <end position="126"/>
    </location>
    <ligand>
        <name>mRNA</name>
        <dbReference type="ChEBI" id="CHEBI:33699"/>
    </ligand>
    <ligandPart>
        <name>mRNA cap</name>
    </ligandPart>
</feature>
<reference key="1">
    <citation type="journal article" date="2002" name="Nature">
        <title>The genome sequence of Schizosaccharomyces pombe.</title>
        <authorList>
            <person name="Wood V."/>
            <person name="Gwilliam R."/>
            <person name="Rajandream M.A."/>
            <person name="Lyne M.H."/>
            <person name="Lyne R."/>
            <person name="Stewart A."/>
            <person name="Sgouros J.G."/>
            <person name="Peat N."/>
            <person name="Hayles J."/>
            <person name="Baker S.G."/>
            <person name="Basham D."/>
            <person name="Bowman S."/>
            <person name="Brooks K."/>
            <person name="Brown D."/>
            <person name="Brown S."/>
            <person name="Chillingworth T."/>
            <person name="Churcher C.M."/>
            <person name="Collins M."/>
            <person name="Connor R."/>
            <person name="Cronin A."/>
            <person name="Davis P."/>
            <person name="Feltwell T."/>
            <person name="Fraser A."/>
            <person name="Gentles S."/>
            <person name="Goble A."/>
            <person name="Hamlin N."/>
            <person name="Harris D.E."/>
            <person name="Hidalgo J."/>
            <person name="Hodgson G."/>
            <person name="Holroyd S."/>
            <person name="Hornsby T."/>
            <person name="Howarth S."/>
            <person name="Huckle E.J."/>
            <person name="Hunt S."/>
            <person name="Jagels K."/>
            <person name="James K.D."/>
            <person name="Jones L."/>
            <person name="Jones M."/>
            <person name="Leather S."/>
            <person name="McDonald S."/>
            <person name="McLean J."/>
            <person name="Mooney P."/>
            <person name="Moule S."/>
            <person name="Mungall K.L."/>
            <person name="Murphy L.D."/>
            <person name="Niblett D."/>
            <person name="Odell C."/>
            <person name="Oliver K."/>
            <person name="O'Neil S."/>
            <person name="Pearson D."/>
            <person name="Quail M.A."/>
            <person name="Rabbinowitsch E."/>
            <person name="Rutherford K.M."/>
            <person name="Rutter S."/>
            <person name="Saunders D."/>
            <person name="Seeger K."/>
            <person name="Sharp S."/>
            <person name="Skelton J."/>
            <person name="Simmonds M.N."/>
            <person name="Squares R."/>
            <person name="Squares S."/>
            <person name="Stevens K."/>
            <person name="Taylor K."/>
            <person name="Taylor R.G."/>
            <person name="Tivey A."/>
            <person name="Walsh S.V."/>
            <person name="Warren T."/>
            <person name="Whitehead S."/>
            <person name="Woodward J.R."/>
            <person name="Volckaert G."/>
            <person name="Aert R."/>
            <person name="Robben J."/>
            <person name="Grymonprez B."/>
            <person name="Weltjens I."/>
            <person name="Vanstreels E."/>
            <person name="Rieger M."/>
            <person name="Schaefer M."/>
            <person name="Mueller-Auer S."/>
            <person name="Gabel C."/>
            <person name="Fuchs M."/>
            <person name="Duesterhoeft A."/>
            <person name="Fritzc C."/>
            <person name="Holzer E."/>
            <person name="Moestl D."/>
            <person name="Hilbert H."/>
            <person name="Borzym K."/>
            <person name="Langer I."/>
            <person name="Beck A."/>
            <person name="Lehrach H."/>
            <person name="Reinhardt R."/>
            <person name="Pohl T.M."/>
            <person name="Eger P."/>
            <person name="Zimmermann W."/>
            <person name="Wedler H."/>
            <person name="Wambutt R."/>
            <person name="Purnelle B."/>
            <person name="Goffeau A."/>
            <person name="Cadieu E."/>
            <person name="Dreano S."/>
            <person name="Gloux S."/>
            <person name="Lelaure V."/>
            <person name="Mottier S."/>
            <person name="Galibert F."/>
            <person name="Aves S.J."/>
            <person name="Xiang Z."/>
            <person name="Hunt C."/>
            <person name="Moore K."/>
            <person name="Hurst S.M."/>
            <person name="Lucas M."/>
            <person name="Rochet M."/>
            <person name="Gaillardin C."/>
            <person name="Tallada V.A."/>
            <person name="Garzon A."/>
            <person name="Thode G."/>
            <person name="Daga R.R."/>
            <person name="Cruzado L."/>
            <person name="Jimenez J."/>
            <person name="Sanchez M."/>
            <person name="del Rey F."/>
            <person name="Benito J."/>
            <person name="Dominguez A."/>
            <person name="Revuelta J.L."/>
            <person name="Moreno S."/>
            <person name="Armstrong J."/>
            <person name="Forsburg S.L."/>
            <person name="Cerutti L."/>
            <person name="Lowe T."/>
            <person name="McCombie W.R."/>
            <person name="Paulsen I."/>
            <person name="Potashkin J."/>
            <person name="Shpakovski G.V."/>
            <person name="Ussery D."/>
            <person name="Barrell B.G."/>
            <person name="Nurse P."/>
        </authorList>
    </citation>
    <scope>NUCLEOTIDE SEQUENCE [LARGE SCALE GENOMIC DNA]</scope>
    <source>
        <strain>972 / ATCC 24843</strain>
    </source>
</reference>
<reference key="2">
    <citation type="journal article" date="2006" name="Nat. Biotechnol.">
        <title>ORFeome cloning and global analysis of protein localization in the fission yeast Schizosaccharomyces pombe.</title>
        <authorList>
            <person name="Matsuyama A."/>
            <person name="Arai R."/>
            <person name="Yashiroda Y."/>
            <person name="Shirai A."/>
            <person name="Kamata A."/>
            <person name="Sekido S."/>
            <person name="Kobayashi Y."/>
            <person name="Hashimoto A."/>
            <person name="Hamamoto M."/>
            <person name="Hiraoka Y."/>
            <person name="Horinouchi S."/>
            <person name="Yoshida M."/>
        </authorList>
    </citation>
    <scope>SUBCELLULAR LOCATION [LARGE SCALE ANALYSIS]</scope>
</reference>
<proteinExistence type="inferred from homology"/>
<sequence>MASITRLDAVSPYLIRRFKNDLRALDAVKQSNCVYVGNLSFYTTEEQIYALFSKCGEIRRIIMGVDRFTKTPCGFCFVEYFENQDALDSLKYISRTSLDERIIRADLDHGYEEGRQYGRGASGGQVRDEMREEFDPGRGGYAKNRQPTSSRQLANYSGISSAPLGSSLELQSNPRYNRWKKN</sequence>
<organism>
    <name type="scientific">Schizosaccharomyces pombe (strain 972 / ATCC 24843)</name>
    <name type="common">Fission yeast</name>
    <dbReference type="NCBI Taxonomy" id="284812"/>
    <lineage>
        <taxon>Eukaryota</taxon>
        <taxon>Fungi</taxon>
        <taxon>Dikarya</taxon>
        <taxon>Ascomycota</taxon>
        <taxon>Taphrinomycotina</taxon>
        <taxon>Schizosaccharomycetes</taxon>
        <taxon>Schizosaccharomycetales</taxon>
        <taxon>Schizosaccharomycetaceae</taxon>
        <taxon>Schizosaccharomyces</taxon>
    </lineage>
</organism>
<accession>Q9P383</accession>
<keyword id="KW-0963">Cytoplasm</keyword>
<keyword id="KW-0507">mRNA processing</keyword>
<keyword id="KW-0508">mRNA splicing</keyword>
<keyword id="KW-0509">mRNA transport</keyword>
<keyword id="KW-0539">Nucleus</keyword>
<keyword id="KW-1185">Reference proteome</keyword>
<keyword id="KW-0694">RNA-binding</keyword>
<keyword id="KW-0813">Transport</keyword>